<gene>
    <name type="primary">OPSB</name>
    <name type="ORF">ARB_04170</name>
</gene>
<sequence length="495" mass="51858">MRGDSFIWSLATAIPLLSTAVESLQVVKRDNPSVLGFDIERFQVAKPIHRDIIAKRASTKTISQDLDNQKNLYFCNLTLGTPPQTIRAHIDTGSSDLWVNTAESRFCSSRRAPCSQGGTYDSSSSSTYQLVNNDFNISYVDGSGATGDYVTDVINVGGIKLKDFQFAIGHTSSSPLGVLGIGYEAGEAQVTRSGDQSYPNLPAALVKAGHIRSNAYSLWLNDLSASRGQILFGGIDTGKFQGKLQTVPVLHTSRGDYTSLVVALTGVGIRTGSDGSIDTFPSQPVAVAMDSGSSLSYLPDALAAKVYNSVDAVFDPANNLAFVPCSMANDKRKLVFTFSSPQIAVGMDELVIDLGPDANGNEATFRDGSKACVFGIAPAGSSISILGDTVLRSAYLVYDLDNNEISIAPTRFNSTETNILEIGTGENSVPDATGVPNAVTSAQVTQATGLPGVETGVPGSRPPSSKAAGQAKRPDFVLGVAAVGLAGAGMLFAAM</sequence>
<evidence type="ECO:0000250" key="1"/>
<evidence type="ECO:0000255" key="2"/>
<evidence type="ECO:0000255" key="3">
    <source>
        <dbReference type="PROSITE-ProRule" id="PRU01103"/>
    </source>
</evidence>
<evidence type="ECO:0000256" key="4">
    <source>
        <dbReference type="SAM" id="MobiDB-lite"/>
    </source>
</evidence>
<evidence type="ECO:0000305" key="5"/>
<accession>D4AIS3</accession>
<protein>
    <recommendedName>
        <fullName>Probable aspartic-type endopeptidase OPSB</fullName>
        <ecNumber>3.4.23.-</ecNumber>
    </recommendedName>
</protein>
<name>OPSB_ARTBC</name>
<feature type="signal peptide" evidence="2">
    <location>
        <begin position="1"/>
        <end position="19"/>
    </location>
</feature>
<feature type="chain" id="PRO_0000397702" description="Probable aspartic-type endopeptidase OPSB">
    <location>
        <begin position="20"/>
        <end position="467"/>
    </location>
</feature>
<feature type="propeptide" id="PRO_0000397703" description="Removed in mature form" evidence="2">
    <location>
        <begin position="468"/>
        <end position="495"/>
    </location>
</feature>
<feature type="domain" description="Peptidase A1" evidence="3">
    <location>
        <begin position="73"/>
        <end position="408"/>
    </location>
</feature>
<feature type="region of interest" description="Disordered" evidence="4">
    <location>
        <begin position="447"/>
        <end position="470"/>
    </location>
</feature>
<feature type="active site" evidence="1">
    <location>
        <position position="91"/>
    </location>
</feature>
<feature type="active site" evidence="1">
    <location>
        <position position="290"/>
    </location>
</feature>
<feature type="lipid moiety-binding region" description="GPI-anchor amidated alanine" evidence="2">
    <location>
        <position position="467"/>
    </location>
</feature>
<feature type="glycosylation site" description="N-linked (GlcNAc...) asparagine" evidence="2">
    <location>
        <position position="76"/>
    </location>
</feature>
<feature type="glycosylation site" description="N-linked (GlcNAc...) asparagine" evidence="2">
    <location>
        <position position="136"/>
    </location>
</feature>
<feature type="glycosylation site" description="N-linked (GlcNAc...) asparagine" evidence="2">
    <location>
        <position position="413"/>
    </location>
</feature>
<organism>
    <name type="scientific">Arthroderma benhamiae (strain ATCC MYA-4681 / CBS 112371)</name>
    <name type="common">Trichophyton mentagrophytes</name>
    <dbReference type="NCBI Taxonomy" id="663331"/>
    <lineage>
        <taxon>Eukaryota</taxon>
        <taxon>Fungi</taxon>
        <taxon>Dikarya</taxon>
        <taxon>Ascomycota</taxon>
        <taxon>Pezizomycotina</taxon>
        <taxon>Eurotiomycetes</taxon>
        <taxon>Eurotiomycetidae</taxon>
        <taxon>Onygenales</taxon>
        <taxon>Arthrodermataceae</taxon>
        <taxon>Trichophyton</taxon>
    </lineage>
</organism>
<reference key="1">
    <citation type="journal article" date="2011" name="Genome Biol.">
        <title>Comparative and functional genomics provide insights into the pathogenicity of dermatophytic fungi.</title>
        <authorList>
            <person name="Burmester A."/>
            <person name="Shelest E."/>
            <person name="Gloeckner G."/>
            <person name="Heddergott C."/>
            <person name="Schindler S."/>
            <person name="Staib P."/>
            <person name="Heidel A."/>
            <person name="Felder M."/>
            <person name="Petzold A."/>
            <person name="Szafranski K."/>
            <person name="Feuermann M."/>
            <person name="Pedruzzi I."/>
            <person name="Priebe S."/>
            <person name="Groth M."/>
            <person name="Winkler R."/>
            <person name="Li W."/>
            <person name="Kniemeyer O."/>
            <person name="Schroeckh V."/>
            <person name="Hertweck C."/>
            <person name="Hube B."/>
            <person name="White T.C."/>
            <person name="Platzer M."/>
            <person name="Guthke R."/>
            <person name="Heitman J."/>
            <person name="Woestemeyer J."/>
            <person name="Zipfel P.F."/>
            <person name="Monod M."/>
            <person name="Brakhage A.A."/>
        </authorList>
    </citation>
    <scope>NUCLEOTIDE SEQUENCE [LARGE SCALE GENOMIC DNA]</scope>
    <source>
        <strain>ATCC MYA-4681 / CBS 112371</strain>
    </source>
</reference>
<proteinExistence type="inferred from homology"/>
<keyword id="KW-0064">Aspartyl protease</keyword>
<keyword id="KW-1003">Cell membrane</keyword>
<keyword id="KW-0325">Glycoprotein</keyword>
<keyword id="KW-0336">GPI-anchor</keyword>
<keyword id="KW-0378">Hydrolase</keyword>
<keyword id="KW-0449">Lipoprotein</keyword>
<keyword id="KW-0472">Membrane</keyword>
<keyword id="KW-0645">Protease</keyword>
<keyword id="KW-1185">Reference proteome</keyword>
<keyword id="KW-0732">Signal</keyword>
<keyword id="KW-0843">Virulence</keyword>
<keyword id="KW-0865">Zymogen</keyword>
<dbReference type="EC" id="3.4.23.-"/>
<dbReference type="EMBL" id="ABSU01000001">
    <property type="protein sequence ID" value="EFE36646.1"/>
    <property type="molecule type" value="Genomic_DNA"/>
</dbReference>
<dbReference type="RefSeq" id="XP_003017291.1">
    <property type="nucleotide sequence ID" value="XM_003017245.1"/>
</dbReference>
<dbReference type="SMR" id="D4AIS3"/>
<dbReference type="STRING" id="663331.D4AIS3"/>
<dbReference type="GlyCosmos" id="D4AIS3">
    <property type="glycosylation" value="3 sites, No reported glycans"/>
</dbReference>
<dbReference type="GeneID" id="9524399"/>
<dbReference type="KEGG" id="abe:ARB_04170"/>
<dbReference type="eggNOG" id="KOG1339">
    <property type="taxonomic scope" value="Eukaryota"/>
</dbReference>
<dbReference type="HOGENOM" id="CLU_013253_9_3_1"/>
<dbReference type="OMA" id="CNVTLGT"/>
<dbReference type="OrthoDB" id="771136at2759"/>
<dbReference type="Proteomes" id="UP000008866">
    <property type="component" value="Unassembled WGS sequence"/>
</dbReference>
<dbReference type="GO" id="GO:0005886">
    <property type="term" value="C:plasma membrane"/>
    <property type="evidence" value="ECO:0007669"/>
    <property type="project" value="UniProtKB-SubCell"/>
</dbReference>
<dbReference type="GO" id="GO:0098552">
    <property type="term" value="C:side of membrane"/>
    <property type="evidence" value="ECO:0007669"/>
    <property type="project" value="UniProtKB-KW"/>
</dbReference>
<dbReference type="GO" id="GO:0004190">
    <property type="term" value="F:aspartic-type endopeptidase activity"/>
    <property type="evidence" value="ECO:0007669"/>
    <property type="project" value="UniProtKB-KW"/>
</dbReference>
<dbReference type="GO" id="GO:0006508">
    <property type="term" value="P:proteolysis"/>
    <property type="evidence" value="ECO:0007669"/>
    <property type="project" value="UniProtKB-KW"/>
</dbReference>
<dbReference type="CDD" id="cd05474">
    <property type="entry name" value="SAP_like"/>
    <property type="match status" value="1"/>
</dbReference>
<dbReference type="FunFam" id="2.40.70.10:FF:000011">
    <property type="entry name" value="Aspartic protease"/>
    <property type="match status" value="1"/>
</dbReference>
<dbReference type="Gene3D" id="2.40.70.10">
    <property type="entry name" value="Acid Proteases"/>
    <property type="match status" value="2"/>
</dbReference>
<dbReference type="InterPro" id="IPR001461">
    <property type="entry name" value="Aspartic_peptidase_A1"/>
</dbReference>
<dbReference type="InterPro" id="IPR033121">
    <property type="entry name" value="PEPTIDASE_A1"/>
</dbReference>
<dbReference type="InterPro" id="IPR021109">
    <property type="entry name" value="Peptidase_aspartic_dom_sf"/>
</dbReference>
<dbReference type="InterPro" id="IPR033876">
    <property type="entry name" value="SAP-like"/>
</dbReference>
<dbReference type="PANTHER" id="PTHR47966:SF65">
    <property type="entry name" value="ASPARTIC-TYPE ENDOPEPTIDASE"/>
    <property type="match status" value="1"/>
</dbReference>
<dbReference type="PANTHER" id="PTHR47966">
    <property type="entry name" value="BETA-SITE APP-CLEAVING ENZYME, ISOFORM A-RELATED"/>
    <property type="match status" value="1"/>
</dbReference>
<dbReference type="Pfam" id="PF00026">
    <property type="entry name" value="Asp"/>
    <property type="match status" value="1"/>
</dbReference>
<dbReference type="PRINTS" id="PR00792">
    <property type="entry name" value="PEPSIN"/>
</dbReference>
<dbReference type="SUPFAM" id="SSF50630">
    <property type="entry name" value="Acid proteases"/>
    <property type="match status" value="1"/>
</dbReference>
<dbReference type="PROSITE" id="PS51767">
    <property type="entry name" value="PEPTIDASE_A1"/>
    <property type="match status" value="1"/>
</dbReference>
<comment type="function">
    <text evidence="1">Probable GPI-anchored aspartic-type endopeptidase which contributes to virulence.</text>
</comment>
<comment type="subcellular location">
    <subcellularLocation>
        <location evidence="5">Cell membrane</location>
        <topology evidence="5">Lipid-anchor</topology>
        <topology evidence="5">GPI-anchor</topology>
    </subcellularLocation>
</comment>
<comment type="similarity">
    <text evidence="5">Belongs to the peptidase A1 family.</text>
</comment>